<keyword id="KW-0007">Acetylation</keyword>
<keyword id="KW-0256">Endoplasmic reticulum</keyword>
<keyword id="KW-0328">Glycosyltransferase</keyword>
<keyword id="KW-0460">Magnesium</keyword>
<keyword id="KW-0464">Manganese</keyword>
<keyword id="KW-0479">Metal-binding</keyword>
<keyword id="KW-0597">Phosphoprotein</keyword>
<keyword id="KW-1185">Reference proteome</keyword>
<keyword id="KW-0808">Transferase</keyword>
<protein>
    <recommendedName>
        <fullName>Dolichol-phosphate mannosyltransferase subunit 1</fullName>
        <ecNumber>2.4.1.83</ecNumber>
    </recommendedName>
    <alternativeName>
        <fullName>Dolichol-phosphate mannose synthase subunit 1</fullName>
        <shortName>DPM synthase subunit 1</shortName>
    </alternativeName>
    <alternativeName>
        <fullName>Dolichyl-phosphate beta-D-mannosyltransferase subunit 1</fullName>
    </alternativeName>
    <alternativeName>
        <fullName>Mannose-P-dolichol synthase subunit 1</fullName>
        <shortName>MPD synthase subunit 1</shortName>
    </alternativeName>
</protein>
<reference key="1">
    <citation type="submission" date="2007-05" db="EMBL/GenBank/DDBJ databases">
        <authorList>
            <consortium name="Porcine genome sequencing project"/>
        </authorList>
    </citation>
    <scope>NUCLEOTIDE SEQUENCE [LARGE SCALE GENOMIC DNA]</scope>
</reference>
<comment type="function">
    <text evidence="1">Transfers mannose from GDP-mannose to dolichol monophosphate to form dolichol phosphate mannose (Dol-P-Man) which is the mannosyl donor in pathways leading to N-glycosylation, glycosyl phosphatidylinositol membrane anchoring, and O-mannosylation of proteins; catalytic subunit of the dolichol-phosphate mannose (DPM) synthase complex.</text>
</comment>
<comment type="catalytic activity">
    <reaction evidence="1">
        <text>a di-trans,poly-cis-dolichyl phosphate + GDP-alpha-D-mannose = a di-trans,poly-cis-dolichyl beta-D-mannosyl phosphate + GDP</text>
        <dbReference type="Rhea" id="RHEA:21184"/>
        <dbReference type="Rhea" id="RHEA-COMP:19498"/>
        <dbReference type="Rhea" id="RHEA-COMP:19501"/>
        <dbReference type="ChEBI" id="CHEBI:57527"/>
        <dbReference type="ChEBI" id="CHEBI:57683"/>
        <dbReference type="ChEBI" id="CHEBI:58189"/>
        <dbReference type="ChEBI" id="CHEBI:58211"/>
        <dbReference type="EC" id="2.4.1.83"/>
    </reaction>
</comment>
<comment type="cofactor">
    <cofactor evidence="2">
        <name>Mg(2+)</name>
        <dbReference type="ChEBI" id="CHEBI:18420"/>
    </cofactor>
    <cofactor evidence="2">
        <name>Mn(2+)</name>
        <dbReference type="ChEBI" id="CHEBI:29035"/>
    </cofactor>
    <cofactor evidence="2">
        <name>Ca(2+)</name>
        <dbReference type="ChEBI" id="CHEBI:29108"/>
    </cofactor>
    <text evidence="2">Binds 1 divalent metal cation.</text>
</comment>
<comment type="pathway">
    <text evidence="1">Protein modification; protein glycosylation.</text>
</comment>
<comment type="subunit">
    <text evidence="1">Component of the dolichol-phosphate mannose (DPM) synthase complex composed of DPM1, DPM2 and DPM3; within the complex, directly interacts with DPM3. This interaction may stabilize DPM1.</text>
</comment>
<comment type="subcellular location">
    <subcellularLocation>
        <location evidence="1">Endoplasmic reticulum</location>
    </subcellularLocation>
</comment>
<comment type="similarity">
    <text evidence="3">Belongs to the glycosyltransferase 2 family.</text>
</comment>
<feature type="initiator methionine" description="Removed" evidence="1">
    <location>
        <position position="1"/>
    </location>
</feature>
<feature type="chain" id="PRO_0000296396" description="Dolichol-phosphate mannosyltransferase subunit 1">
    <location>
        <begin position="2"/>
        <end position="259"/>
    </location>
</feature>
<feature type="binding site" evidence="2">
    <location>
        <position position="31"/>
    </location>
    <ligand>
        <name>GDP-alpha-D-mannose</name>
        <dbReference type="ChEBI" id="CHEBI:57527"/>
    </ligand>
</feature>
<feature type="binding site" evidence="2">
    <location>
        <position position="33"/>
    </location>
    <ligand>
        <name>GDP-alpha-D-mannose</name>
        <dbReference type="ChEBI" id="CHEBI:57527"/>
    </ligand>
</feature>
<feature type="binding site" evidence="2">
    <location>
        <position position="35"/>
    </location>
    <ligand>
        <name>GDP-alpha-D-mannose</name>
        <dbReference type="ChEBI" id="CHEBI:57527"/>
    </ligand>
</feature>
<feature type="binding site" evidence="2">
    <location>
        <position position="62"/>
    </location>
    <ligand>
        <name>GDP-alpha-D-mannose</name>
        <dbReference type="ChEBI" id="CHEBI:57527"/>
    </ligand>
</feature>
<feature type="binding site" evidence="2">
    <location>
        <position position="64"/>
    </location>
    <ligand>
        <name>GDP-alpha-D-mannose</name>
        <dbReference type="ChEBI" id="CHEBI:57527"/>
    </ligand>
</feature>
<feature type="binding site" evidence="2">
    <location>
        <position position="117"/>
    </location>
    <ligand>
        <name>GDP-alpha-D-mannose</name>
        <dbReference type="ChEBI" id="CHEBI:57527"/>
    </ligand>
</feature>
<feature type="binding site" evidence="2">
    <location>
        <position position="118"/>
    </location>
    <ligand>
        <name>GDP-alpha-D-mannose</name>
        <dbReference type="ChEBI" id="CHEBI:57527"/>
    </ligand>
</feature>
<feature type="binding site" evidence="2">
    <location>
        <position position="119"/>
    </location>
    <ligand>
        <name>GDP-alpha-D-mannose</name>
        <dbReference type="ChEBI" id="CHEBI:57527"/>
    </ligand>
</feature>
<feature type="binding site" evidence="2">
    <location>
        <position position="119"/>
    </location>
    <ligand>
        <name>Mg(2+)</name>
        <dbReference type="ChEBI" id="CHEBI:18420"/>
    </ligand>
</feature>
<feature type="binding site" evidence="2">
    <location>
        <position position="119"/>
    </location>
    <ligand>
        <name>Mn(2+)</name>
        <dbReference type="ChEBI" id="CHEBI:29035"/>
    </ligand>
</feature>
<feature type="binding site" evidence="2">
    <location>
        <position position="146"/>
    </location>
    <ligand>
        <name>GDP-alpha-D-mannose</name>
        <dbReference type="ChEBI" id="CHEBI:57527"/>
    </ligand>
</feature>
<feature type="binding site" evidence="2">
    <location>
        <position position="233"/>
    </location>
    <ligand>
        <name>GDP-alpha-D-mannose</name>
        <dbReference type="ChEBI" id="CHEBI:57527"/>
    </ligand>
</feature>
<feature type="binding site" evidence="2">
    <location>
        <position position="239"/>
    </location>
    <ligand>
        <name>GDP-alpha-D-mannose</name>
        <dbReference type="ChEBI" id="CHEBI:57527"/>
    </ligand>
</feature>
<feature type="modified residue" description="N-acetylalanine" evidence="1">
    <location>
        <position position="2"/>
    </location>
</feature>
<feature type="modified residue" description="Phosphoserine" evidence="1">
    <location>
        <position position="3"/>
    </location>
</feature>
<evidence type="ECO:0000250" key="1">
    <source>
        <dbReference type="UniProtKB" id="O60762"/>
    </source>
</evidence>
<evidence type="ECO:0000250" key="2">
    <source>
        <dbReference type="UniProtKB" id="Q8U4M3"/>
    </source>
</evidence>
<evidence type="ECO:0000305" key="3"/>
<name>DPM1_PIG</name>
<accession>A5GFZ5</accession>
<sequence>MASEEASRNSRSRWEPEGRFPRQDKYSVLLPTYNERENLPLIVWLLVKSFSESGINYEIIIIDDGSPDGTRDIAEQLVKIYGSDKILLRPREKKLGLGTAYIHGMKHATGNYIIIMDADLSHHPKFIPEFIRKQKEGNFDIVSGTRYKGNGGVYGWDLKRKIISRGANFITQILLRPGASDLTGSFRLYRKEVLQKLIEKCVSKGYVFQMEMIVRARQLNYTIGEVPISFVDRVYGESKLGGNEIVSFLKGLLTLFATT</sequence>
<dbReference type="EC" id="2.4.1.83"/>
<dbReference type="EMBL" id="CR974565">
    <property type="protein sequence ID" value="CAN13124.1"/>
    <property type="molecule type" value="Genomic_DNA"/>
</dbReference>
<dbReference type="EMBL" id="CT009560">
    <property type="protein sequence ID" value="CAN13124.1"/>
    <property type="status" value="JOINED"/>
    <property type="molecule type" value="Genomic_DNA"/>
</dbReference>
<dbReference type="EMBL" id="CT009560">
    <property type="protein sequence ID" value="CAN13232.1"/>
    <property type="molecule type" value="Genomic_DNA"/>
</dbReference>
<dbReference type="EMBL" id="CR974565">
    <property type="protein sequence ID" value="CAN13232.1"/>
    <property type="status" value="JOINED"/>
    <property type="molecule type" value="Genomic_DNA"/>
</dbReference>
<dbReference type="RefSeq" id="NP_001095290.1">
    <property type="nucleotide sequence ID" value="NM_001101820.1"/>
</dbReference>
<dbReference type="SMR" id="A5GFZ5"/>
<dbReference type="FunCoup" id="A5GFZ5">
    <property type="interactions" value="2563"/>
</dbReference>
<dbReference type="STRING" id="9823.ENSSSCP00000055745"/>
<dbReference type="CAZy" id="GT2">
    <property type="family name" value="Glycosyltransferase Family 2"/>
</dbReference>
<dbReference type="PaxDb" id="9823-ENSSSCP00000007962"/>
<dbReference type="PeptideAtlas" id="A5GFZ5"/>
<dbReference type="Ensembl" id="ENSSSCT00000040191.2">
    <property type="protein sequence ID" value="ENSSSCP00000055745.1"/>
    <property type="gene ID" value="ENSSSCG00000034952.2"/>
</dbReference>
<dbReference type="Ensembl" id="ENSSSCT00030000904.1">
    <property type="protein sequence ID" value="ENSSSCP00030000418.1"/>
    <property type="gene ID" value="ENSSSCG00030000666.1"/>
</dbReference>
<dbReference type="Ensembl" id="ENSSSCT00040054399.1">
    <property type="protein sequence ID" value="ENSSSCP00040022624.1"/>
    <property type="gene ID" value="ENSSSCG00040040479.1"/>
</dbReference>
<dbReference type="Ensembl" id="ENSSSCT00045044744.1">
    <property type="protein sequence ID" value="ENSSSCP00045031038.1"/>
    <property type="gene ID" value="ENSSSCG00045026265.1"/>
</dbReference>
<dbReference type="Ensembl" id="ENSSSCT00055054008.1">
    <property type="protein sequence ID" value="ENSSSCP00055043097.1"/>
    <property type="gene ID" value="ENSSSCG00055027297.1"/>
</dbReference>
<dbReference type="Ensembl" id="ENSSSCT00070035138.1">
    <property type="protein sequence ID" value="ENSSSCP00070029347.1"/>
    <property type="gene ID" value="ENSSSCG00070017800.1"/>
</dbReference>
<dbReference type="Ensembl" id="ENSSSCT00115012544">
    <property type="protein sequence ID" value="ENSSSCP00115011853"/>
    <property type="gene ID" value="ENSSSCG00115007194"/>
</dbReference>
<dbReference type="Ensembl" id="ENSSSCT00130027007">
    <property type="protein sequence ID" value="ENSSSCP00130018289"/>
    <property type="gene ID" value="ENSSSCG00130013634"/>
</dbReference>
<dbReference type="GeneID" id="100124379"/>
<dbReference type="KEGG" id="ssc:100124379"/>
<dbReference type="CTD" id="8813"/>
<dbReference type="VGNC" id="VGNC:96235">
    <property type="gene designation" value="DPM1"/>
</dbReference>
<dbReference type="eggNOG" id="KOG2978">
    <property type="taxonomic scope" value="Eukaryota"/>
</dbReference>
<dbReference type="GeneTree" id="ENSGT00940000153481"/>
<dbReference type="InParanoid" id="A5GFZ5"/>
<dbReference type="OMA" id="KCFRREV"/>
<dbReference type="OrthoDB" id="2603at2759"/>
<dbReference type="TreeFam" id="TF105617"/>
<dbReference type="Reactome" id="R-SSC-162699">
    <property type="pathway name" value="Synthesis of dolichyl-phosphate mannose"/>
</dbReference>
<dbReference type="UniPathway" id="UPA00378"/>
<dbReference type="Proteomes" id="UP000008227">
    <property type="component" value="Chromosome 17"/>
</dbReference>
<dbReference type="Proteomes" id="UP000314985">
    <property type="component" value="Chromosome 17"/>
</dbReference>
<dbReference type="Proteomes" id="UP000694570">
    <property type="component" value="Unplaced"/>
</dbReference>
<dbReference type="Proteomes" id="UP000694571">
    <property type="component" value="Unplaced"/>
</dbReference>
<dbReference type="Proteomes" id="UP000694720">
    <property type="component" value="Unplaced"/>
</dbReference>
<dbReference type="Proteomes" id="UP000694722">
    <property type="component" value="Unplaced"/>
</dbReference>
<dbReference type="Proteomes" id="UP000694723">
    <property type="component" value="Unplaced"/>
</dbReference>
<dbReference type="Proteomes" id="UP000694724">
    <property type="component" value="Unplaced"/>
</dbReference>
<dbReference type="Proteomes" id="UP000694725">
    <property type="component" value="Unplaced"/>
</dbReference>
<dbReference type="Proteomes" id="UP000694726">
    <property type="component" value="Unplaced"/>
</dbReference>
<dbReference type="Proteomes" id="UP000694727">
    <property type="component" value="Unplaced"/>
</dbReference>
<dbReference type="Proteomes" id="UP000694728">
    <property type="component" value="Unplaced"/>
</dbReference>
<dbReference type="Bgee" id="ENSSSCG00000034952">
    <property type="expression patterns" value="Expressed in Ammon's horn and 44 other cell types or tissues"/>
</dbReference>
<dbReference type="ExpressionAtlas" id="A5GFZ5">
    <property type="expression patterns" value="baseline and differential"/>
</dbReference>
<dbReference type="GO" id="GO:0033185">
    <property type="term" value="C:dolichol-phosphate-mannose synthase complex"/>
    <property type="evidence" value="ECO:0007669"/>
    <property type="project" value="Ensembl"/>
</dbReference>
<dbReference type="GO" id="GO:0005789">
    <property type="term" value="C:endoplasmic reticulum membrane"/>
    <property type="evidence" value="ECO:0000250"/>
    <property type="project" value="UniProtKB"/>
</dbReference>
<dbReference type="GO" id="GO:0004582">
    <property type="term" value="F:dolichyl-phosphate beta-D-mannosyltransferase activity"/>
    <property type="evidence" value="ECO:0000250"/>
    <property type="project" value="UniProtKB"/>
</dbReference>
<dbReference type="GO" id="GO:0004169">
    <property type="term" value="F:dolichyl-phosphate-mannose-protein mannosyltransferase activity"/>
    <property type="evidence" value="ECO:0000250"/>
    <property type="project" value="UniProtKB"/>
</dbReference>
<dbReference type="GO" id="GO:0046872">
    <property type="term" value="F:metal ion binding"/>
    <property type="evidence" value="ECO:0000250"/>
    <property type="project" value="UniProtKB"/>
</dbReference>
<dbReference type="GO" id="GO:0019348">
    <property type="term" value="P:dolichol metabolic process"/>
    <property type="evidence" value="ECO:0007669"/>
    <property type="project" value="Ensembl"/>
</dbReference>
<dbReference type="GO" id="GO:0180047">
    <property type="term" value="P:dolichol phosphate mannose biosynthetic process"/>
    <property type="evidence" value="ECO:0000250"/>
    <property type="project" value="UniProtKB"/>
</dbReference>
<dbReference type="GO" id="GO:0006488">
    <property type="term" value="P:dolichol-linked oligosaccharide biosynthetic process"/>
    <property type="evidence" value="ECO:0000318"/>
    <property type="project" value="GO_Central"/>
</dbReference>
<dbReference type="GO" id="GO:0006506">
    <property type="term" value="P:GPI anchor biosynthetic process"/>
    <property type="evidence" value="ECO:0000250"/>
    <property type="project" value="UniProtKB"/>
</dbReference>
<dbReference type="GO" id="GO:0035268">
    <property type="term" value="P:protein mannosylation"/>
    <property type="evidence" value="ECO:0000250"/>
    <property type="project" value="UniProtKB"/>
</dbReference>
<dbReference type="GO" id="GO:0035269">
    <property type="term" value="P:protein O-linked mannosylation"/>
    <property type="evidence" value="ECO:0000250"/>
    <property type="project" value="UniProtKB"/>
</dbReference>
<dbReference type="GO" id="GO:0070482">
    <property type="term" value="P:response to oxygen levels"/>
    <property type="evidence" value="ECO:0007669"/>
    <property type="project" value="Ensembl"/>
</dbReference>
<dbReference type="CDD" id="cd06442">
    <property type="entry name" value="DPM1_like"/>
    <property type="match status" value="1"/>
</dbReference>
<dbReference type="FunFam" id="3.90.550.10:FF:000036">
    <property type="entry name" value="Dolichol-phosphate mannosyltransferase subunit 1"/>
    <property type="match status" value="1"/>
</dbReference>
<dbReference type="Gene3D" id="3.90.550.10">
    <property type="entry name" value="Spore Coat Polysaccharide Biosynthesis Protein SpsA, Chain A"/>
    <property type="match status" value="1"/>
</dbReference>
<dbReference type="InterPro" id="IPR039528">
    <property type="entry name" value="DPM1-like"/>
</dbReference>
<dbReference type="InterPro" id="IPR001173">
    <property type="entry name" value="Glyco_trans_2-like"/>
</dbReference>
<dbReference type="InterPro" id="IPR029044">
    <property type="entry name" value="Nucleotide-diphossugar_trans"/>
</dbReference>
<dbReference type="PANTHER" id="PTHR43398">
    <property type="entry name" value="DOLICHOL-PHOSPHATE MANNOSYLTRANSFERASE SUBUNIT 1"/>
    <property type="match status" value="1"/>
</dbReference>
<dbReference type="PANTHER" id="PTHR43398:SF1">
    <property type="entry name" value="DOLICHOL-PHOSPHATE MANNOSYLTRANSFERASE SUBUNIT 1"/>
    <property type="match status" value="1"/>
</dbReference>
<dbReference type="Pfam" id="PF00535">
    <property type="entry name" value="Glycos_transf_2"/>
    <property type="match status" value="1"/>
</dbReference>
<dbReference type="SUPFAM" id="SSF53448">
    <property type="entry name" value="Nucleotide-diphospho-sugar transferases"/>
    <property type="match status" value="1"/>
</dbReference>
<organism>
    <name type="scientific">Sus scrofa</name>
    <name type="common">Pig</name>
    <dbReference type="NCBI Taxonomy" id="9823"/>
    <lineage>
        <taxon>Eukaryota</taxon>
        <taxon>Metazoa</taxon>
        <taxon>Chordata</taxon>
        <taxon>Craniata</taxon>
        <taxon>Vertebrata</taxon>
        <taxon>Euteleostomi</taxon>
        <taxon>Mammalia</taxon>
        <taxon>Eutheria</taxon>
        <taxon>Laurasiatheria</taxon>
        <taxon>Artiodactyla</taxon>
        <taxon>Suina</taxon>
        <taxon>Suidae</taxon>
        <taxon>Sus</taxon>
    </lineage>
</organism>
<proteinExistence type="inferred from homology"/>
<gene>
    <name type="primary">DPM1</name>
</gene>